<name>GUN_ROBSP</name>
<evidence type="ECO:0000250" key="1"/>
<evidence type="ECO:0000255" key="2"/>
<evidence type="ECO:0000269" key="3">
    <source>
    </source>
</evidence>
<evidence type="ECO:0000305" key="4"/>
<feature type="signal peptide" evidence="3">
    <location>
        <begin position="1"/>
        <end position="17"/>
    </location>
</feature>
<feature type="chain" id="PRO_0000184049" description="Endoglucanase 1">
    <location>
        <begin position="18"/>
        <end position="385"/>
    </location>
</feature>
<feature type="active site" description="Proton donor" evidence="1">
    <location>
        <position position="176"/>
    </location>
</feature>
<feature type="active site" description="Nucleophile" evidence="1">
    <location>
        <position position="284"/>
    </location>
</feature>
<feature type="glycosylation site" description="N-linked (GlcNAc...) asparagine" evidence="2">
    <location>
        <position position="93"/>
    </location>
</feature>
<feature type="glycosylation site" description="N-linked (GlcNAc...) asparagine" evidence="2">
    <location>
        <position position="140"/>
    </location>
</feature>
<feature type="glycosylation site" description="N-linked (GlcNAc...) asparagine" evidence="2">
    <location>
        <position position="200"/>
    </location>
</feature>
<feature type="glycosylation site" description="N-linked (GlcNAc...) asparagine" evidence="2">
    <location>
        <position position="237"/>
    </location>
</feature>
<feature type="glycosylation site" description="N-linked (GlcNAc...) asparagine" evidence="2">
    <location>
        <position position="289"/>
    </location>
</feature>
<feature type="glycosylation site" description="N-linked (GlcNAc...) asparagine" evidence="2">
    <location>
        <position position="331"/>
    </location>
</feature>
<feature type="sequence conflict" description="In Ref. 2; AA sequence." evidence="4" ref="2">
    <original>SS</original>
    <variation>GN</variation>
    <location>
        <begin position="27"/>
        <end position="28"/>
    </location>
</feature>
<sequence length="385" mass="41428">MKLVFSALASLLSGASATIYYAGVAESSGEFGVWSATQTPGTGLPGRFGVDYAFISEAAVDVHVDQNHLNLFRVAFLLERMCPPATGLGAAFNETHFDYFKEAVDYITVTKGAYAILDPHNYMRYNDPSYQPFSGSVIGNTSDSTAATTEQFGEFWGELASRFNDNERVIFGLMNEPHDMATSLVLANNQAAIDAIRAANASNLIIMPGNSWTGGHSWTEGSDPSSALLNQFKDPLNNTAIDIHEYLDYDFSGGHLECVSDPETNLAALTAWLKENNLKAFITEFGGSNSTSCQEMLPDLINYMADNAEYIGWTAWAAGPFWGPNSPCCTNSTQLGSLEPGSTAVDGSPGLYDTVWLPVIQPLVPTELQWSGPASISGGELTSRA</sequence>
<accession>P23044</accession>
<accession>Q9P981</accession>
<organism>
    <name type="scientific">Robillarda sp. (strain Y-20)</name>
    <dbReference type="NCBI Taxonomy" id="72589"/>
    <lineage>
        <taxon>Eukaryota</taxon>
        <taxon>Fungi</taxon>
        <taxon>Dikarya</taxon>
        <taxon>Ascomycota</taxon>
        <taxon>Pezizomycotina</taxon>
        <taxon>Sordariomycetes</taxon>
        <taxon>Xylariomycetidae</taxon>
        <taxon>Amphisphaeriales</taxon>
        <taxon>Sporocadaceae</taxon>
        <taxon>Robillarda</taxon>
    </lineage>
</organism>
<keyword id="KW-0119">Carbohydrate metabolism</keyword>
<keyword id="KW-0136">Cellulose degradation</keyword>
<keyword id="KW-0903">Direct protein sequencing</keyword>
<keyword id="KW-0325">Glycoprotein</keyword>
<keyword id="KW-0326">Glycosidase</keyword>
<keyword id="KW-0378">Hydrolase</keyword>
<keyword id="KW-0624">Polysaccharide degradation</keyword>
<keyword id="KW-0732">Signal</keyword>
<dbReference type="EC" id="3.2.1.4"/>
<dbReference type="EMBL" id="AB030819">
    <property type="protein sequence ID" value="BAA90480.1"/>
    <property type="molecule type" value="Genomic_DNA"/>
</dbReference>
<dbReference type="SMR" id="P23044"/>
<dbReference type="CAZy" id="GH5">
    <property type="family name" value="Glycoside Hydrolase Family 5"/>
</dbReference>
<dbReference type="GlyCosmos" id="P23044">
    <property type="glycosylation" value="6 sites, No reported glycans"/>
</dbReference>
<dbReference type="UniPathway" id="UPA00696"/>
<dbReference type="GO" id="GO:0008810">
    <property type="term" value="F:cellulase activity"/>
    <property type="evidence" value="ECO:0007669"/>
    <property type="project" value="UniProtKB-EC"/>
</dbReference>
<dbReference type="GO" id="GO:0030245">
    <property type="term" value="P:cellulose catabolic process"/>
    <property type="evidence" value="ECO:0007669"/>
    <property type="project" value="UniProtKB-UniPathway"/>
</dbReference>
<dbReference type="Gene3D" id="3.20.20.80">
    <property type="entry name" value="Glycosidases"/>
    <property type="match status" value="1"/>
</dbReference>
<dbReference type="InterPro" id="IPR001547">
    <property type="entry name" value="Glyco_hydro_5"/>
</dbReference>
<dbReference type="InterPro" id="IPR018087">
    <property type="entry name" value="Glyco_hydro_5_CS"/>
</dbReference>
<dbReference type="InterPro" id="IPR017853">
    <property type="entry name" value="Glycoside_hydrolase_SF"/>
</dbReference>
<dbReference type="PANTHER" id="PTHR34142">
    <property type="entry name" value="ENDO-BETA-1,4-GLUCANASE A"/>
    <property type="match status" value="1"/>
</dbReference>
<dbReference type="PANTHER" id="PTHR34142:SF1">
    <property type="entry name" value="GLYCOSIDE HYDROLASE FAMILY 5 DOMAIN-CONTAINING PROTEIN"/>
    <property type="match status" value="1"/>
</dbReference>
<dbReference type="Pfam" id="PF00150">
    <property type="entry name" value="Cellulase"/>
    <property type="match status" value="1"/>
</dbReference>
<dbReference type="SUPFAM" id="SSF51445">
    <property type="entry name" value="(Trans)glycosidases"/>
    <property type="match status" value="1"/>
</dbReference>
<dbReference type="PROSITE" id="PS00659">
    <property type="entry name" value="GLYCOSYL_HYDROL_F5"/>
    <property type="match status" value="1"/>
</dbReference>
<comment type="function">
    <text>Active towards carboxymethyl cellulose.</text>
</comment>
<comment type="catalytic activity">
    <reaction>
        <text>Endohydrolysis of (1-&gt;4)-beta-D-glucosidic linkages in cellulose, lichenin and cereal beta-D-glucans.</text>
        <dbReference type="EC" id="3.2.1.4"/>
    </reaction>
</comment>
<comment type="pathway">
    <text>Glycan metabolism; cellulose degradation.</text>
</comment>
<comment type="similarity">
    <text evidence="4">Belongs to the glycosyl hydrolase 5 (cellulase A) family.</text>
</comment>
<comment type="sequence caution" evidence="4">
    <conflict type="frameshift" ref="2"/>
</comment>
<protein>
    <recommendedName>
        <fullName>Endoglucanase 1</fullName>
        <ecNumber>3.2.1.4</ecNumber>
    </recommendedName>
    <alternativeName>
        <fullName>Carboxymethyl-cellulase I</fullName>
        <shortName>CMCase I</shortName>
    </alternativeName>
    <alternativeName>
        <fullName>Endo-1,4-beta-glucanase</fullName>
    </alternativeName>
    <alternativeName>
        <fullName>Endoglucanase I</fullName>
    </alternativeName>
</protein>
<reference key="1">
    <citation type="submission" date="1999-08" db="EMBL/GenBank/DDBJ databases">
        <title>Endoglucanase gene from cellulolytic fungi, Robillarda sp. Y-20.</title>
        <authorList>
            <person name="Kashiwagi Y."/>
        </authorList>
    </citation>
    <scope>NUCLEOTIDE SEQUENCE [GENOMIC DNA]</scope>
</reference>
<reference key="2">
    <citation type="journal article" date="1990" name="J. Biochem.">
        <title>Cloning and sequencing of the endo-cellulase cDNA from Robillarda sp. Y-20.</title>
        <authorList>
            <person name="Yoshigi N."/>
            <person name="Taniguchi H."/>
            <person name="Sasaki T."/>
        </authorList>
    </citation>
    <scope>NUCLEOTIDE SEQUENCE [MRNA] OF 33-385</scope>
    <scope>PROTEIN SEQUENCE OF 18-35</scope>
</reference>
<proteinExistence type="evidence at protein level"/>
<gene>
    <name type="primary">eg 1</name>
</gene>